<accession>P9WF11</accession>
<accession>L0TFL5</accession>
<accession>O06250</accession>
<organism>
    <name type="scientific">Mycobacterium tuberculosis (strain ATCC 25618 / H37Rv)</name>
    <dbReference type="NCBI Taxonomy" id="83332"/>
    <lineage>
        <taxon>Bacteria</taxon>
        <taxon>Bacillati</taxon>
        <taxon>Actinomycetota</taxon>
        <taxon>Actinomycetes</taxon>
        <taxon>Mycobacteriales</taxon>
        <taxon>Mycobacteriaceae</taxon>
        <taxon>Mycobacterium</taxon>
        <taxon>Mycobacterium tuberculosis complex</taxon>
    </lineage>
</organism>
<gene>
    <name type="primary">nnr</name>
    <name type="ordered locus">Rv3433c</name>
    <name type="ORF">MTCY77.05c</name>
</gene>
<protein>
    <recommendedName>
        <fullName>Bifunctional NAD(P)H-hydrate repair enzyme Nnr</fullName>
    </recommendedName>
    <alternativeName>
        <fullName>Nicotinamide nucleotide repair protein</fullName>
    </alternativeName>
    <domain>
        <recommendedName>
            <fullName>ADP-dependent (S)-NAD(P)H-hydrate dehydratase</fullName>
            <ecNumber>4.2.1.136</ecNumber>
        </recommendedName>
        <alternativeName>
            <fullName>ADP-dependent NAD(P)HX dehydratase</fullName>
        </alternativeName>
    </domain>
    <domain>
        <recommendedName>
            <fullName>NAD(P)H-hydrate epimerase</fullName>
            <ecNumber>5.1.99.6</ecNumber>
        </recommendedName>
        <alternativeName>
            <fullName>NAD(P)HX epimerase</fullName>
        </alternativeName>
    </domain>
</protein>
<dbReference type="EC" id="4.2.1.136"/>
<dbReference type="EC" id="5.1.99.6"/>
<dbReference type="EMBL" id="AL123456">
    <property type="protein sequence ID" value="CCP46255.1"/>
    <property type="molecule type" value="Genomic_DNA"/>
</dbReference>
<dbReference type="PIR" id="G70975">
    <property type="entry name" value="G70975"/>
</dbReference>
<dbReference type="RefSeq" id="NP_217950.1">
    <property type="nucleotide sequence ID" value="NC_000962.3"/>
</dbReference>
<dbReference type="RefSeq" id="WP_003912231.1">
    <property type="nucleotide sequence ID" value="NZ_NVQJ01000027.1"/>
</dbReference>
<dbReference type="SMR" id="P9WF11"/>
<dbReference type="FunCoup" id="P9WF11">
    <property type="interactions" value="91"/>
</dbReference>
<dbReference type="STRING" id="83332.Rv3433c"/>
<dbReference type="PaxDb" id="83332-Rv3433c"/>
<dbReference type="GeneID" id="887571"/>
<dbReference type="KEGG" id="mtu:Rv3433c"/>
<dbReference type="KEGG" id="mtv:RVBD_3433c"/>
<dbReference type="TubercuList" id="Rv3433c"/>
<dbReference type="eggNOG" id="COG0062">
    <property type="taxonomic scope" value="Bacteria"/>
</dbReference>
<dbReference type="eggNOG" id="COG0063">
    <property type="taxonomic scope" value="Bacteria"/>
</dbReference>
<dbReference type="InParanoid" id="P9WF11"/>
<dbReference type="OrthoDB" id="9806925at2"/>
<dbReference type="PhylomeDB" id="P9WF11"/>
<dbReference type="Proteomes" id="UP000001584">
    <property type="component" value="Chromosome"/>
</dbReference>
<dbReference type="GO" id="GO:0052855">
    <property type="term" value="F:ADP-dependent NAD(P)H-hydrate dehydratase activity"/>
    <property type="evidence" value="ECO:0000318"/>
    <property type="project" value="GO_Central"/>
</dbReference>
<dbReference type="GO" id="GO:0005524">
    <property type="term" value="F:ATP binding"/>
    <property type="evidence" value="ECO:0007669"/>
    <property type="project" value="UniProtKB-KW"/>
</dbReference>
<dbReference type="GO" id="GO:0046872">
    <property type="term" value="F:metal ion binding"/>
    <property type="evidence" value="ECO:0007669"/>
    <property type="project" value="UniProtKB-KW"/>
</dbReference>
<dbReference type="GO" id="GO:0052856">
    <property type="term" value="F:NAD(P)HX epimerase activity"/>
    <property type="evidence" value="ECO:0000318"/>
    <property type="project" value="GO_Central"/>
</dbReference>
<dbReference type="GO" id="GO:0110051">
    <property type="term" value="P:metabolite repair"/>
    <property type="evidence" value="ECO:0000318"/>
    <property type="project" value="GO_Central"/>
</dbReference>
<dbReference type="GO" id="GO:0046496">
    <property type="term" value="P:nicotinamide nucleotide metabolic process"/>
    <property type="evidence" value="ECO:0007669"/>
    <property type="project" value="UniProtKB-UniRule"/>
</dbReference>
<dbReference type="CDD" id="cd01171">
    <property type="entry name" value="YXKO-related"/>
    <property type="match status" value="1"/>
</dbReference>
<dbReference type="FunFam" id="3.40.1190.20:FF:000052">
    <property type="entry name" value="Multifunctional fusion protein"/>
    <property type="match status" value="1"/>
</dbReference>
<dbReference type="FunFam" id="3.40.50.10260:FF:000008">
    <property type="entry name" value="Multifunctional fusion protein"/>
    <property type="match status" value="1"/>
</dbReference>
<dbReference type="Gene3D" id="3.40.1190.20">
    <property type="match status" value="1"/>
</dbReference>
<dbReference type="Gene3D" id="3.40.50.10260">
    <property type="entry name" value="YjeF N-terminal domain"/>
    <property type="match status" value="1"/>
</dbReference>
<dbReference type="HAMAP" id="MF_01965">
    <property type="entry name" value="NADHX_dehydratase"/>
    <property type="match status" value="1"/>
</dbReference>
<dbReference type="HAMAP" id="MF_01966">
    <property type="entry name" value="NADHX_epimerase"/>
    <property type="match status" value="1"/>
</dbReference>
<dbReference type="InterPro" id="IPR017953">
    <property type="entry name" value="Carbohydrate_kinase_pred_CS"/>
</dbReference>
<dbReference type="InterPro" id="IPR000631">
    <property type="entry name" value="CARKD"/>
</dbReference>
<dbReference type="InterPro" id="IPR030677">
    <property type="entry name" value="Nnr"/>
</dbReference>
<dbReference type="InterPro" id="IPR029056">
    <property type="entry name" value="Ribokinase-like"/>
</dbReference>
<dbReference type="InterPro" id="IPR004443">
    <property type="entry name" value="YjeF_N_dom"/>
</dbReference>
<dbReference type="InterPro" id="IPR036652">
    <property type="entry name" value="YjeF_N_dom_sf"/>
</dbReference>
<dbReference type="NCBIfam" id="TIGR00196">
    <property type="entry name" value="yjeF_cterm"/>
    <property type="match status" value="1"/>
</dbReference>
<dbReference type="NCBIfam" id="TIGR00197">
    <property type="entry name" value="yjeF_nterm"/>
    <property type="match status" value="1"/>
</dbReference>
<dbReference type="PANTHER" id="PTHR12592:SF0">
    <property type="entry name" value="ATP-DEPENDENT (S)-NAD(P)H-HYDRATE DEHYDRATASE"/>
    <property type="match status" value="1"/>
</dbReference>
<dbReference type="PANTHER" id="PTHR12592">
    <property type="entry name" value="ATP-DEPENDENT (S)-NAD(P)H-HYDRATE DEHYDRATASE FAMILY MEMBER"/>
    <property type="match status" value="1"/>
</dbReference>
<dbReference type="Pfam" id="PF01256">
    <property type="entry name" value="Carb_kinase"/>
    <property type="match status" value="1"/>
</dbReference>
<dbReference type="Pfam" id="PF03853">
    <property type="entry name" value="YjeF_N"/>
    <property type="match status" value="1"/>
</dbReference>
<dbReference type="PIRSF" id="PIRSF017184">
    <property type="entry name" value="Nnr"/>
    <property type="match status" value="1"/>
</dbReference>
<dbReference type="SUPFAM" id="SSF53613">
    <property type="entry name" value="Ribokinase-like"/>
    <property type="match status" value="1"/>
</dbReference>
<dbReference type="SUPFAM" id="SSF64153">
    <property type="entry name" value="YjeF N-terminal domain-like"/>
    <property type="match status" value="1"/>
</dbReference>
<dbReference type="PROSITE" id="PS01049">
    <property type="entry name" value="YJEF_C_1"/>
    <property type="match status" value="1"/>
</dbReference>
<dbReference type="PROSITE" id="PS01050">
    <property type="entry name" value="YJEF_C_2"/>
    <property type="match status" value="1"/>
</dbReference>
<dbReference type="PROSITE" id="PS51383">
    <property type="entry name" value="YJEF_C_3"/>
    <property type="match status" value="1"/>
</dbReference>
<dbReference type="PROSITE" id="PS51385">
    <property type="entry name" value="YJEF_N"/>
    <property type="match status" value="1"/>
</dbReference>
<feature type="chain" id="PRO_0000119048" description="Bifunctional NAD(P)H-hydrate repair enzyme Nnr">
    <location>
        <begin position="1"/>
        <end position="473"/>
    </location>
</feature>
<feature type="domain" description="YjeF N-terminal">
    <location>
        <begin position="10"/>
        <end position="205"/>
    </location>
</feature>
<feature type="domain" description="YjeF C-terminal">
    <location>
        <begin position="210"/>
        <end position="473"/>
    </location>
</feature>
<feature type="region of interest" description="NAD(P)H-hydrate epimerase" evidence="1">
    <location>
        <begin position="1"/>
        <end position="211"/>
    </location>
</feature>
<feature type="region of interest" description="NADPHX 1; for epimerase activity" evidence="1">
    <location>
        <begin position="62"/>
        <end position="66"/>
    </location>
</feature>
<feature type="region of interest" description="NADPHX 1; for epimerase activity" evidence="1">
    <location>
        <begin position="123"/>
        <end position="129"/>
    </location>
</feature>
<feature type="region of interest" description="ADP-dependent (S)-NAD(P)H-hydrate dehydratase" evidence="1">
    <location>
        <begin position="211"/>
        <end position="473"/>
    </location>
</feature>
<feature type="region of interest" description="NADPHX 2; for dehydratase activity" evidence="1">
    <location>
        <begin position="348"/>
        <end position="354"/>
    </location>
</feature>
<feature type="binding site" evidence="1">
    <location>
        <position position="63"/>
    </location>
    <ligand>
        <name>K(+)</name>
        <dbReference type="ChEBI" id="CHEBI:29103"/>
    </ligand>
</feature>
<feature type="binding site" evidence="1">
    <location>
        <position position="119"/>
    </location>
    <ligand>
        <name>K(+)</name>
        <dbReference type="ChEBI" id="CHEBI:29103"/>
    </ligand>
</feature>
<feature type="binding site" evidence="1">
    <location>
        <position position="152"/>
    </location>
    <ligand>
        <name>(6S)-NADPHX</name>
        <dbReference type="ChEBI" id="CHEBI:64076"/>
        <label>1</label>
        <note>for epimerase activity</note>
    </ligand>
</feature>
<feature type="binding site" evidence="1">
    <location>
        <position position="155"/>
    </location>
    <ligand>
        <name>K(+)</name>
        <dbReference type="ChEBI" id="CHEBI:29103"/>
    </ligand>
</feature>
<feature type="binding site" evidence="1">
    <location>
        <position position="298"/>
    </location>
    <ligand>
        <name>(6S)-NADPHX</name>
        <dbReference type="ChEBI" id="CHEBI:64076"/>
        <label>2</label>
        <note>for dehydratase activity</note>
    </ligand>
</feature>
<feature type="binding site" evidence="1">
    <location>
        <begin position="382"/>
        <end position="386"/>
    </location>
    <ligand>
        <name>ADP</name>
        <dbReference type="ChEBI" id="CHEBI:456216"/>
    </ligand>
</feature>
<feature type="binding site" evidence="1">
    <location>
        <begin position="402"/>
        <end position="411"/>
    </location>
    <ligand>
        <name>ADP</name>
        <dbReference type="ChEBI" id="CHEBI:456216"/>
    </ligand>
</feature>
<feature type="binding site" evidence="1">
    <location>
        <position position="412"/>
    </location>
    <ligand>
        <name>(6S)-NADPHX</name>
        <dbReference type="ChEBI" id="CHEBI:64076"/>
        <label>2</label>
        <note>for dehydratase activity</note>
    </ligand>
</feature>
<name>NNR_MYCTU</name>
<comment type="function">
    <text evidence="1">Bifunctional enzyme that catalyzes the epimerization of the S- and R-forms of NAD(P)HX and the dehydration of the S-form of NAD(P)HX at the expense of ADP, which is converted to AMP. This allows the repair of both epimers of NAD(P)HX, a damaged form of NAD(P)H that is a result of enzymatic or heat-dependent hydration (By similarity).</text>
</comment>
<comment type="catalytic activity">
    <reaction>
        <text>(6S)-NADHX + ADP = AMP + phosphate + NADH + H(+)</text>
        <dbReference type="Rhea" id="RHEA:32223"/>
        <dbReference type="ChEBI" id="CHEBI:15378"/>
        <dbReference type="ChEBI" id="CHEBI:43474"/>
        <dbReference type="ChEBI" id="CHEBI:57945"/>
        <dbReference type="ChEBI" id="CHEBI:64074"/>
        <dbReference type="ChEBI" id="CHEBI:456215"/>
        <dbReference type="ChEBI" id="CHEBI:456216"/>
        <dbReference type="EC" id="4.2.1.136"/>
    </reaction>
</comment>
<comment type="catalytic activity">
    <reaction>
        <text>(6S)-NADPHX + ADP = AMP + phosphate + NADPH + H(+)</text>
        <dbReference type="Rhea" id="RHEA:32235"/>
        <dbReference type="ChEBI" id="CHEBI:15378"/>
        <dbReference type="ChEBI" id="CHEBI:43474"/>
        <dbReference type="ChEBI" id="CHEBI:57783"/>
        <dbReference type="ChEBI" id="CHEBI:64076"/>
        <dbReference type="ChEBI" id="CHEBI:456215"/>
        <dbReference type="ChEBI" id="CHEBI:456216"/>
        <dbReference type="EC" id="4.2.1.136"/>
    </reaction>
</comment>
<comment type="catalytic activity">
    <reaction>
        <text>(6R)-NADHX = (6S)-NADHX</text>
        <dbReference type="Rhea" id="RHEA:32215"/>
        <dbReference type="ChEBI" id="CHEBI:64074"/>
        <dbReference type="ChEBI" id="CHEBI:64075"/>
        <dbReference type="EC" id="5.1.99.6"/>
    </reaction>
</comment>
<comment type="catalytic activity">
    <reaction>
        <text>(6R)-NADPHX = (6S)-NADPHX</text>
        <dbReference type="Rhea" id="RHEA:32227"/>
        <dbReference type="ChEBI" id="CHEBI:64076"/>
        <dbReference type="ChEBI" id="CHEBI:64077"/>
        <dbReference type="EC" id="5.1.99.6"/>
    </reaction>
</comment>
<comment type="cofactor">
    <cofactor evidence="1">
        <name>K(+)</name>
        <dbReference type="ChEBI" id="CHEBI:29103"/>
    </cofactor>
    <text evidence="1">Binds 1 potassium ion per subunit.</text>
</comment>
<comment type="similarity">
    <text evidence="2">In the N-terminal section; belongs to the NnrE/AIBP family.</text>
</comment>
<comment type="similarity">
    <text evidence="2">In the C-terminal section; belongs to the NnrD/CARKD family.</text>
</comment>
<reference key="1">
    <citation type="journal article" date="1998" name="Nature">
        <title>Deciphering the biology of Mycobacterium tuberculosis from the complete genome sequence.</title>
        <authorList>
            <person name="Cole S.T."/>
            <person name="Brosch R."/>
            <person name="Parkhill J."/>
            <person name="Garnier T."/>
            <person name="Churcher C.M."/>
            <person name="Harris D.E."/>
            <person name="Gordon S.V."/>
            <person name="Eiglmeier K."/>
            <person name="Gas S."/>
            <person name="Barry C.E. III"/>
            <person name="Tekaia F."/>
            <person name="Badcock K."/>
            <person name="Basham D."/>
            <person name="Brown D."/>
            <person name="Chillingworth T."/>
            <person name="Connor R."/>
            <person name="Davies R.M."/>
            <person name="Devlin K."/>
            <person name="Feltwell T."/>
            <person name="Gentles S."/>
            <person name="Hamlin N."/>
            <person name="Holroyd S."/>
            <person name="Hornsby T."/>
            <person name="Jagels K."/>
            <person name="Krogh A."/>
            <person name="McLean J."/>
            <person name="Moule S."/>
            <person name="Murphy L.D."/>
            <person name="Oliver S."/>
            <person name="Osborne J."/>
            <person name="Quail M.A."/>
            <person name="Rajandream M.A."/>
            <person name="Rogers J."/>
            <person name="Rutter S."/>
            <person name="Seeger K."/>
            <person name="Skelton S."/>
            <person name="Squares S."/>
            <person name="Squares R."/>
            <person name="Sulston J.E."/>
            <person name="Taylor K."/>
            <person name="Whitehead S."/>
            <person name="Barrell B.G."/>
        </authorList>
    </citation>
    <scope>NUCLEOTIDE SEQUENCE [LARGE SCALE GENOMIC DNA]</scope>
    <source>
        <strain>ATCC 25618 / H37Rv</strain>
    </source>
</reference>
<reference key="2">
    <citation type="journal article" date="2011" name="Mol. Cell. Proteomics">
        <title>Proteogenomic analysis of Mycobacterium tuberculosis by high resolution mass spectrometry.</title>
        <authorList>
            <person name="Kelkar D.S."/>
            <person name="Kumar D."/>
            <person name="Kumar P."/>
            <person name="Balakrishnan L."/>
            <person name="Muthusamy B."/>
            <person name="Yadav A.K."/>
            <person name="Shrivastava P."/>
            <person name="Marimuthu A."/>
            <person name="Anand S."/>
            <person name="Sundaram H."/>
            <person name="Kingsbury R."/>
            <person name="Harsha H.C."/>
            <person name="Nair B."/>
            <person name="Prasad T.S."/>
            <person name="Chauhan D.S."/>
            <person name="Katoch K."/>
            <person name="Katoch V.M."/>
            <person name="Kumar P."/>
            <person name="Chaerkady R."/>
            <person name="Ramachandran S."/>
            <person name="Dash D."/>
            <person name="Pandey A."/>
        </authorList>
    </citation>
    <scope>IDENTIFICATION BY MASS SPECTROMETRY [LARGE SCALE ANALYSIS]</scope>
    <source>
        <strain>ATCC 25618 / H37Rv</strain>
    </source>
</reference>
<evidence type="ECO:0000250" key="1"/>
<evidence type="ECO:0000305" key="2"/>
<keyword id="KW-0067">ATP-binding</keyword>
<keyword id="KW-0413">Isomerase</keyword>
<keyword id="KW-0456">Lyase</keyword>
<keyword id="KW-0479">Metal-binding</keyword>
<keyword id="KW-0511">Multifunctional enzyme</keyword>
<keyword id="KW-0520">NAD</keyword>
<keyword id="KW-0521">NADP</keyword>
<keyword id="KW-0547">Nucleotide-binding</keyword>
<keyword id="KW-0630">Potassium</keyword>
<keyword id="KW-1185">Reference proteome</keyword>
<proteinExistence type="evidence at protein level"/>
<sequence>MRHYYSVDTIRAAEAPLLASLPDGALMRRAAFGLATEIGRELTARTGGVVGRRVCAVVGSGDNGGDALWAATFLRRRGAAADAVLLNPDRTHRKALAAFTKSGGRLVESVSAATDLVIDGVVGISGSGPLRPAAAQVFAAVQAAAIPVVAVDIPSGIDVATGAITGPAVHAALTVTFGGLKPVHALADCGRVVLVDIGLDLAHTDVLGFEATDVAARWPVPGPRDDKYTQGVTGVLAGSSTYPGAAVLCTGAAVAATSGMVRYAGTAHAEVLAHWPEVIASPTPAAAGRVQAWVVGPGLGTDEAGAAALWFALDTDLPVLVDADGLTMLADHPDLVAGRNAPTVLTPHAGEFARLAGAPPGDDRVGACRQLADALGATVLLKGNVTVIADPGGPVYLNPAGQSWAATAGSGDVLSGMIGALLASGLPSGEAAAAAAFVHARASAAAAADPGPGDAPTSASRISGHIRAALAAL</sequence>